<feature type="chain" id="PRO_1000016487" description="Histidine--tRNA ligase">
    <location>
        <begin position="1"/>
        <end position="424"/>
    </location>
</feature>
<name>SYH_YERPA</name>
<gene>
    <name evidence="1" type="primary">hisS</name>
    <name type="ordered locus">YPA_2318</name>
</gene>
<dbReference type="EC" id="6.1.1.21" evidence="1"/>
<dbReference type="EMBL" id="CP000308">
    <property type="protein sequence ID" value="ABG14283.1"/>
    <property type="molecule type" value="Genomic_DNA"/>
</dbReference>
<dbReference type="RefSeq" id="WP_002209816.1">
    <property type="nucleotide sequence ID" value="NZ_CP009906.1"/>
</dbReference>
<dbReference type="SMR" id="Q1C5I9"/>
<dbReference type="GeneID" id="57975836"/>
<dbReference type="KEGG" id="ypa:YPA_2318"/>
<dbReference type="Proteomes" id="UP000001971">
    <property type="component" value="Chromosome"/>
</dbReference>
<dbReference type="GO" id="GO:0005737">
    <property type="term" value="C:cytoplasm"/>
    <property type="evidence" value="ECO:0007669"/>
    <property type="project" value="UniProtKB-SubCell"/>
</dbReference>
<dbReference type="GO" id="GO:0005524">
    <property type="term" value="F:ATP binding"/>
    <property type="evidence" value="ECO:0007669"/>
    <property type="project" value="UniProtKB-UniRule"/>
</dbReference>
<dbReference type="GO" id="GO:0004821">
    <property type="term" value="F:histidine-tRNA ligase activity"/>
    <property type="evidence" value="ECO:0007669"/>
    <property type="project" value="UniProtKB-UniRule"/>
</dbReference>
<dbReference type="GO" id="GO:0006427">
    <property type="term" value="P:histidyl-tRNA aminoacylation"/>
    <property type="evidence" value="ECO:0007669"/>
    <property type="project" value="UniProtKB-UniRule"/>
</dbReference>
<dbReference type="CDD" id="cd00773">
    <property type="entry name" value="HisRS-like_core"/>
    <property type="match status" value="1"/>
</dbReference>
<dbReference type="CDD" id="cd00859">
    <property type="entry name" value="HisRS_anticodon"/>
    <property type="match status" value="1"/>
</dbReference>
<dbReference type="FunFam" id="3.30.930.10:FF:000005">
    <property type="entry name" value="Histidine--tRNA ligase"/>
    <property type="match status" value="1"/>
</dbReference>
<dbReference type="FunFam" id="3.40.50.800:FF:000007">
    <property type="entry name" value="Histidine--tRNA ligase"/>
    <property type="match status" value="1"/>
</dbReference>
<dbReference type="Gene3D" id="3.40.50.800">
    <property type="entry name" value="Anticodon-binding domain"/>
    <property type="match status" value="1"/>
</dbReference>
<dbReference type="Gene3D" id="3.30.930.10">
    <property type="entry name" value="Bira Bifunctional Protein, Domain 2"/>
    <property type="match status" value="1"/>
</dbReference>
<dbReference type="HAMAP" id="MF_00127">
    <property type="entry name" value="His_tRNA_synth"/>
    <property type="match status" value="1"/>
</dbReference>
<dbReference type="InterPro" id="IPR006195">
    <property type="entry name" value="aa-tRNA-synth_II"/>
</dbReference>
<dbReference type="InterPro" id="IPR045864">
    <property type="entry name" value="aa-tRNA-synth_II/BPL/LPL"/>
</dbReference>
<dbReference type="InterPro" id="IPR004154">
    <property type="entry name" value="Anticodon-bd"/>
</dbReference>
<dbReference type="InterPro" id="IPR036621">
    <property type="entry name" value="Anticodon-bd_dom_sf"/>
</dbReference>
<dbReference type="InterPro" id="IPR015807">
    <property type="entry name" value="His-tRNA-ligase"/>
</dbReference>
<dbReference type="InterPro" id="IPR041715">
    <property type="entry name" value="HisRS-like_core"/>
</dbReference>
<dbReference type="InterPro" id="IPR004516">
    <property type="entry name" value="HisRS/HisZ"/>
</dbReference>
<dbReference type="InterPro" id="IPR033656">
    <property type="entry name" value="HisRS_anticodon"/>
</dbReference>
<dbReference type="NCBIfam" id="TIGR00442">
    <property type="entry name" value="hisS"/>
    <property type="match status" value="1"/>
</dbReference>
<dbReference type="PANTHER" id="PTHR43707:SF1">
    <property type="entry name" value="HISTIDINE--TRNA LIGASE, MITOCHONDRIAL-RELATED"/>
    <property type="match status" value="1"/>
</dbReference>
<dbReference type="PANTHER" id="PTHR43707">
    <property type="entry name" value="HISTIDYL-TRNA SYNTHETASE"/>
    <property type="match status" value="1"/>
</dbReference>
<dbReference type="Pfam" id="PF03129">
    <property type="entry name" value="HGTP_anticodon"/>
    <property type="match status" value="1"/>
</dbReference>
<dbReference type="Pfam" id="PF13393">
    <property type="entry name" value="tRNA-synt_His"/>
    <property type="match status" value="1"/>
</dbReference>
<dbReference type="PIRSF" id="PIRSF001549">
    <property type="entry name" value="His-tRNA_synth"/>
    <property type="match status" value="1"/>
</dbReference>
<dbReference type="SUPFAM" id="SSF52954">
    <property type="entry name" value="Class II aaRS ABD-related"/>
    <property type="match status" value="1"/>
</dbReference>
<dbReference type="SUPFAM" id="SSF55681">
    <property type="entry name" value="Class II aaRS and biotin synthetases"/>
    <property type="match status" value="1"/>
</dbReference>
<dbReference type="PROSITE" id="PS50862">
    <property type="entry name" value="AA_TRNA_LIGASE_II"/>
    <property type="match status" value="1"/>
</dbReference>
<proteinExistence type="inferred from homology"/>
<reference key="1">
    <citation type="journal article" date="2006" name="J. Bacteriol.">
        <title>Complete genome sequence of Yersinia pestis strains Antiqua and Nepal516: evidence of gene reduction in an emerging pathogen.</title>
        <authorList>
            <person name="Chain P.S.G."/>
            <person name="Hu P."/>
            <person name="Malfatti S.A."/>
            <person name="Radnedge L."/>
            <person name="Larimer F."/>
            <person name="Vergez L.M."/>
            <person name="Worsham P."/>
            <person name="Chu M.C."/>
            <person name="Andersen G.L."/>
        </authorList>
    </citation>
    <scope>NUCLEOTIDE SEQUENCE [LARGE SCALE GENOMIC DNA]</scope>
    <source>
        <strain>Antiqua</strain>
    </source>
</reference>
<comment type="catalytic activity">
    <reaction evidence="1">
        <text>tRNA(His) + L-histidine + ATP = L-histidyl-tRNA(His) + AMP + diphosphate + H(+)</text>
        <dbReference type="Rhea" id="RHEA:17313"/>
        <dbReference type="Rhea" id="RHEA-COMP:9665"/>
        <dbReference type="Rhea" id="RHEA-COMP:9689"/>
        <dbReference type="ChEBI" id="CHEBI:15378"/>
        <dbReference type="ChEBI" id="CHEBI:30616"/>
        <dbReference type="ChEBI" id="CHEBI:33019"/>
        <dbReference type="ChEBI" id="CHEBI:57595"/>
        <dbReference type="ChEBI" id="CHEBI:78442"/>
        <dbReference type="ChEBI" id="CHEBI:78527"/>
        <dbReference type="ChEBI" id="CHEBI:456215"/>
        <dbReference type="EC" id="6.1.1.21"/>
    </reaction>
</comment>
<comment type="subunit">
    <text evidence="1">Homodimer.</text>
</comment>
<comment type="subcellular location">
    <subcellularLocation>
        <location evidence="1">Cytoplasm</location>
    </subcellularLocation>
</comment>
<comment type="similarity">
    <text evidence="1">Belongs to the class-II aminoacyl-tRNA synthetase family.</text>
</comment>
<keyword id="KW-0030">Aminoacyl-tRNA synthetase</keyword>
<keyword id="KW-0067">ATP-binding</keyword>
<keyword id="KW-0963">Cytoplasm</keyword>
<keyword id="KW-0436">Ligase</keyword>
<keyword id="KW-0547">Nucleotide-binding</keyword>
<keyword id="KW-0648">Protein biosynthesis</keyword>
<protein>
    <recommendedName>
        <fullName evidence="1">Histidine--tRNA ligase</fullName>
        <ecNumber evidence="1">6.1.1.21</ecNumber>
    </recommendedName>
    <alternativeName>
        <fullName evidence="1">Histidyl-tRNA synthetase</fullName>
        <shortName evidence="1">HisRS</shortName>
    </alternativeName>
</protein>
<accession>Q1C5I9</accession>
<evidence type="ECO:0000255" key="1">
    <source>
        <dbReference type="HAMAP-Rule" id="MF_00127"/>
    </source>
</evidence>
<organism>
    <name type="scientific">Yersinia pestis bv. Antiqua (strain Antiqua)</name>
    <dbReference type="NCBI Taxonomy" id="360102"/>
    <lineage>
        <taxon>Bacteria</taxon>
        <taxon>Pseudomonadati</taxon>
        <taxon>Pseudomonadota</taxon>
        <taxon>Gammaproteobacteria</taxon>
        <taxon>Enterobacterales</taxon>
        <taxon>Yersiniaceae</taxon>
        <taxon>Yersinia</taxon>
    </lineage>
</organism>
<sequence length="424" mass="47262">MAKNIQAIRGMNDYLPADTAIWQRIESILKQVLSGYGYSEIRMPIVEQTPLFKRAIGEVTDVVEKEMYTFDDRNGESLTLRPEGTAGCVRAGIEHGLLYNQEQRLWYIGPMFRYERPQKGRYRQFHQLGAEVFGLPGPDIDAELILLTARWWRALGIFEHVKLELNSIGSLAARADYREALVAFLEQHVEVLDEDCKRRMYSNPLRVLDSKNPDVQQLLDDAPKLSDYLDEESKQHFAGLCELLDKASIPYTVNERLVRGLDYYNRTVFEWVTHSLGAQGTVCAGGRYDGLVEQLGGRATPAVGFAMGLERLVLLVQAVNADFQVPATVDAYVISSGEGAQSAAMLLAESLRDALPTLKIMTNYGGGNVKKQFTRADKWGARVALMLGESEVAAQQVVVKDLRNGEQETLAQADVAARLALMLG</sequence>